<proteinExistence type="inferred from homology"/>
<feature type="chain" id="PRO_1000007437" description="Large ribosomal subunit protein uL29">
    <location>
        <begin position="1"/>
        <end position="64"/>
    </location>
</feature>
<dbReference type="EMBL" id="CP000010">
    <property type="protein sequence ID" value="AAU47861.1"/>
    <property type="molecule type" value="Genomic_DNA"/>
</dbReference>
<dbReference type="RefSeq" id="WP_004199856.1">
    <property type="nucleotide sequence ID" value="NC_006348.1"/>
</dbReference>
<dbReference type="RefSeq" id="YP_104158.1">
    <property type="nucleotide sequence ID" value="NC_006348.1"/>
</dbReference>
<dbReference type="SMR" id="Q62GL3"/>
<dbReference type="GeneID" id="93061824"/>
<dbReference type="KEGG" id="bma:BMA2624"/>
<dbReference type="PATRIC" id="fig|243160.12.peg.2695"/>
<dbReference type="eggNOG" id="COG0255">
    <property type="taxonomic scope" value="Bacteria"/>
</dbReference>
<dbReference type="HOGENOM" id="CLU_158491_1_1_4"/>
<dbReference type="PRO" id="PR:Q62GL3"/>
<dbReference type="Proteomes" id="UP000006693">
    <property type="component" value="Chromosome 1"/>
</dbReference>
<dbReference type="GO" id="GO:0022625">
    <property type="term" value="C:cytosolic large ribosomal subunit"/>
    <property type="evidence" value="ECO:0007669"/>
    <property type="project" value="TreeGrafter"/>
</dbReference>
<dbReference type="GO" id="GO:0003735">
    <property type="term" value="F:structural constituent of ribosome"/>
    <property type="evidence" value="ECO:0007669"/>
    <property type="project" value="InterPro"/>
</dbReference>
<dbReference type="GO" id="GO:0006412">
    <property type="term" value="P:translation"/>
    <property type="evidence" value="ECO:0007669"/>
    <property type="project" value="UniProtKB-UniRule"/>
</dbReference>
<dbReference type="CDD" id="cd00427">
    <property type="entry name" value="Ribosomal_L29_HIP"/>
    <property type="match status" value="1"/>
</dbReference>
<dbReference type="Gene3D" id="6.10.140.1970">
    <property type="match status" value="1"/>
</dbReference>
<dbReference type="HAMAP" id="MF_00374">
    <property type="entry name" value="Ribosomal_uL29"/>
    <property type="match status" value="1"/>
</dbReference>
<dbReference type="InterPro" id="IPR050063">
    <property type="entry name" value="Ribosomal_protein_uL29"/>
</dbReference>
<dbReference type="InterPro" id="IPR001854">
    <property type="entry name" value="Ribosomal_uL29"/>
</dbReference>
<dbReference type="InterPro" id="IPR018254">
    <property type="entry name" value="Ribosomal_uL29_CS"/>
</dbReference>
<dbReference type="InterPro" id="IPR036049">
    <property type="entry name" value="Ribosomal_uL29_sf"/>
</dbReference>
<dbReference type="NCBIfam" id="TIGR00012">
    <property type="entry name" value="L29"/>
    <property type="match status" value="1"/>
</dbReference>
<dbReference type="PANTHER" id="PTHR10916">
    <property type="entry name" value="60S RIBOSOMAL PROTEIN L35/50S RIBOSOMAL PROTEIN L29"/>
    <property type="match status" value="1"/>
</dbReference>
<dbReference type="PANTHER" id="PTHR10916:SF0">
    <property type="entry name" value="LARGE RIBOSOMAL SUBUNIT PROTEIN UL29C"/>
    <property type="match status" value="1"/>
</dbReference>
<dbReference type="Pfam" id="PF00831">
    <property type="entry name" value="Ribosomal_L29"/>
    <property type="match status" value="1"/>
</dbReference>
<dbReference type="SUPFAM" id="SSF46561">
    <property type="entry name" value="Ribosomal protein L29 (L29p)"/>
    <property type="match status" value="1"/>
</dbReference>
<dbReference type="PROSITE" id="PS00579">
    <property type="entry name" value="RIBOSOMAL_L29"/>
    <property type="match status" value="1"/>
</dbReference>
<evidence type="ECO:0000255" key="1">
    <source>
        <dbReference type="HAMAP-Rule" id="MF_00374"/>
    </source>
</evidence>
<evidence type="ECO:0000305" key="2"/>
<accession>Q62GL3</accession>
<gene>
    <name evidence="1" type="primary">rpmC</name>
    <name type="ordered locus">BMA2624</name>
</gene>
<reference key="1">
    <citation type="journal article" date="2004" name="Proc. Natl. Acad. Sci. U.S.A.">
        <title>Structural flexibility in the Burkholderia mallei genome.</title>
        <authorList>
            <person name="Nierman W.C."/>
            <person name="DeShazer D."/>
            <person name="Kim H.S."/>
            <person name="Tettelin H."/>
            <person name="Nelson K.E."/>
            <person name="Feldblyum T.V."/>
            <person name="Ulrich R.L."/>
            <person name="Ronning C.M."/>
            <person name="Brinkac L.M."/>
            <person name="Daugherty S.C."/>
            <person name="Davidsen T.D."/>
            <person name="DeBoy R.T."/>
            <person name="Dimitrov G."/>
            <person name="Dodson R.J."/>
            <person name="Durkin A.S."/>
            <person name="Gwinn M.L."/>
            <person name="Haft D.H."/>
            <person name="Khouri H.M."/>
            <person name="Kolonay J.F."/>
            <person name="Madupu R."/>
            <person name="Mohammoud Y."/>
            <person name="Nelson W.C."/>
            <person name="Radune D."/>
            <person name="Romero C.M."/>
            <person name="Sarria S."/>
            <person name="Selengut J."/>
            <person name="Shamblin C."/>
            <person name="Sullivan S.A."/>
            <person name="White O."/>
            <person name="Yu Y."/>
            <person name="Zafar N."/>
            <person name="Zhou L."/>
            <person name="Fraser C.M."/>
        </authorList>
    </citation>
    <scope>NUCLEOTIDE SEQUENCE [LARGE SCALE GENOMIC DNA]</scope>
    <source>
        <strain>ATCC 23344</strain>
    </source>
</reference>
<organism>
    <name type="scientific">Burkholderia mallei (strain ATCC 23344)</name>
    <dbReference type="NCBI Taxonomy" id="243160"/>
    <lineage>
        <taxon>Bacteria</taxon>
        <taxon>Pseudomonadati</taxon>
        <taxon>Pseudomonadota</taxon>
        <taxon>Betaproteobacteria</taxon>
        <taxon>Burkholderiales</taxon>
        <taxon>Burkholderiaceae</taxon>
        <taxon>Burkholderia</taxon>
        <taxon>pseudomallei group</taxon>
    </lineage>
</organism>
<protein>
    <recommendedName>
        <fullName evidence="1">Large ribosomal subunit protein uL29</fullName>
    </recommendedName>
    <alternativeName>
        <fullName evidence="2">50S ribosomal protein L29</fullName>
    </alternativeName>
</protein>
<name>RL29_BURMA</name>
<keyword id="KW-1185">Reference proteome</keyword>
<keyword id="KW-0687">Ribonucleoprotein</keyword>
<keyword id="KW-0689">Ribosomal protein</keyword>
<sequence>MKASELLQKDQAALNKELSDLLKAQFGLRMQLATQQLTNTSQLKKVRRDIARVRTVLTQKANQK</sequence>
<comment type="similarity">
    <text evidence="1">Belongs to the universal ribosomal protein uL29 family.</text>
</comment>